<evidence type="ECO:0000250" key="1"/>
<evidence type="ECO:0000255" key="2">
    <source>
        <dbReference type="HAMAP-Rule" id="MF_01109"/>
    </source>
</evidence>
<keyword id="KW-0028">Amino-acid biosynthesis</keyword>
<keyword id="KW-0055">Arginine biosynthesis</keyword>
<keyword id="KW-0963">Cytoplasm</keyword>
<keyword id="KW-1185">Reference proteome</keyword>
<keyword id="KW-0808">Transferase</keyword>
<feature type="chain" id="PRO_0000112899" description="Ornithine carbamoyltransferase">
    <location>
        <begin position="1"/>
        <end position="339"/>
    </location>
</feature>
<feature type="binding site" evidence="2">
    <location>
        <begin position="56"/>
        <end position="59"/>
    </location>
    <ligand>
        <name>carbamoyl phosphate</name>
        <dbReference type="ChEBI" id="CHEBI:58228"/>
    </ligand>
</feature>
<feature type="binding site" evidence="2">
    <location>
        <position position="107"/>
    </location>
    <ligand>
        <name>carbamoyl phosphate</name>
        <dbReference type="ChEBI" id="CHEBI:58228"/>
    </ligand>
</feature>
<feature type="binding site" evidence="2">
    <location>
        <begin position="134"/>
        <end position="137"/>
    </location>
    <ligand>
        <name>carbamoyl phosphate</name>
        <dbReference type="ChEBI" id="CHEBI:58228"/>
    </ligand>
</feature>
<feature type="binding site" evidence="2">
    <location>
        <position position="168"/>
    </location>
    <ligand>
        <name>L-ornithine</name>
        <dbReference type="ChEBI" id="CHEBI:46911"/>
    </ligand>
</feature>
<feature type="binding site" evidence="2">
    <location>
        <position position="232"/>
    </location>
    <ligand>
        <name>L-ornithine</name>
        <dbReference type="ChEBI" id="CHEBI:46911"/>
    </ligand>
</feature>
<feature type="binding site" evidence="2">
    <location>
        <begin position="236"/>
        <end position="237"/>
    </location>
    <ligand>
        <name>L-ornithine</name>
        <dbReference type="ChEBI" id="CHEBI:46911"/>
    </ligand>
</feature>
<feature type="binding site" evidence="2">
    <location>
        <begin position="274"/>
        <end position="275"/>
    </location>
    <ligand>
        <name>carbamoyl phosphate</name>
        <dbReference type="ChEBI" id="CHEBI:58228"/>
    </ligand>
</feature>
<feature type="binding site" evidence="2">
    <location>
        <position position="320"/>
    </location>
    <ligand>
        <name>carbamoyl phosphate</name>
        <dbReference type="ChEBI" id="CHEBI:58228"/>
    </ligand>
</feature>
<name>OTC_BUCBP</name>
<gene>
    <name evidence="2" type="primary">argI</name>
    <name type="ordered locus">bbp_333</name>
</gene>
<protein>
    <recommendedName>
        <fullName evidence="2">Ornithine carbamoyltransferase</fullName>
        <shortName evidence="2">OTCase</shortName>
        <ecNumber evidence="2">2.1.3.3</ecNumber>
    </recommendedName>
</protein>
<sequence length="339" mass="39015">MNALYKKNFLKLSDFTSLDIRNIINIACILKYQKKNKNEFPYLKNKNIVLIFEKQSTRTRCAFEIASFDQGAQVTYLGPGSTHLGYKESIQDTARVLSSIYDGIQYRGHNHETIKNLAKYSNVPVWNGLTEKFHPTQILADLLTIYETLPEKSFCNIKCAYVGDARNNISNTLLEASSLLGLNLCLVAPKCFWPNYDFFLKCQLKAKKNHGNIICTEDIQKGVRGADFIYTDVWVSMGEPKKTWHNRIKLLKKYQVNLKMLLLTQNKKIKVLHCLPSFHDKNTIVGEEIINKHNLDNGIEITNQVFNSQSDVIFRQSENRLHTIKALLLSTLLKEFPYI</sequence>
<reference key="1">
    <citation type="journal article" date="2003" name="Proc. Natl. Acad. Sci. U.S.A.">
        <title>Reductive genome evolution in Buchnera aphidicola.</title>
        <authorList>
            <person name="van Ham R.C.H.J."/>
            <person name="Kamerbeek J."/>
            <person name="Palacios C."/>
            <person name="Rausell C."/>
            <person name="Abascal F."/>
            <person name="Bastolla U."/>
            <person name="Fernandez J.M."/>
            <person name="Jimenez L."/>
            <person name="Postigo M."/>
            <person name="Silva F.J."/>
            <person name="Tamames J."/>
            <person name="Viguera E."/>
            <person name="Latorre A."/>
            <person name="Valencia A."/>
            <person name="Moran F."/>
            <person name="Moya A."/>
        </authorList>
    </citation>
    <scope>NUCLEOTIDE SEQUENCE [LARGE SCALE GENOMIC DNA]</scope>
    <source>
        <strain>Bp</strain>
    </source>
</reference>
<organism>
    <name type="scientific">Buchnera aphidicola subsp. Baizongia pistaciae (strain Bp)</name>
    <dbReference type="NCBI Taxonomy" id="224915"/>
    <lineage>
        <taxon>Bacteria</taxon>
        <taxon>Pseudomonadati</taxon>
        <taxon>Pseudomonadota</taxon>
        <taxon>Gammaproteobacteria</taxon>
        <taxon>Enterobacterales</taxon>
        <taxon>Erwiniaceae</taxon>
        <taxon>Buchnera</taxon>
    </lineage>
</organism>
<accession>Q89AG1</accession>
<dbReference type="EC" id="2.1.3.3" evidence="2"/>
<dbReference type="EMBL" id="AE016826">
    <property type="protein sequence ID" value="AAO27054.1"/>
    <property type="molecule type" value="Genomic_DNA"/>
</dbReference>
<dbReference type="RefSeq" id="WP_011091455.1">
    <property type="nucleotide sequence ID" value="NC_004545.1"/>
</dbReference>
<dbReference type="SMR" id="Q89AG1"/>
<dbReference type="STRING" id="224915.bbp_333"/>
<dbReference type="KEGG" id="bab:bbp_333"/>
<dbReference type="eggNOG" id="COG0078">
    <property type="taxonomic scope" value="Bacteria"/>
</dbReference>
<dbReference type="HOGENOM" id="CLU_043846_3_1_6"/>
<dbReference type="OrthoDB" id="9802587at2"/>
<dbReference type="UniPathway" id="UPA00068">
    <property type="reaction ID" value="UER00112"/>
</dbReference>
<dbReference type="Proteomes" id="UP000000601">
    <property type="component" value="Chromosome"/>
</dbReference>
<dbReference type="GO" id="GO:0005737">
    <property type="term" value="C:cytoplasm"/>
    <property type="evidence" value="ECO:0007669"/>
    <property type="project" value="UniProtKB-SubCell"/>
</dbReference>
<dbReference type="GO" id="GO:0016597">
    <property type="term" value="F:amino acid binding"/>
    <property type="evidence" value="ECO:0007669"/>
    <property type="project" value="InterPro"/>
</dbReference>
<dbReference type="GO" id="GO:0004585">
    <property type="term" value="F:ornithine carbamoyltransferase activity"/>
    <property type="evidence" value="ECO:0007669"/>
    <property type="project" value="UniProtKB-UniRule"/>
</dbReference>
<dbReference type="GO" id="GO:0042450">
    <property type="term" value="P:arginine biosynthetic process via ornithine"/>
    <property type="evidence" value="ECO:0007669"/>
    <property type="project" value="TreeGrafter"/>
</dbReference>
<dbReference type="GO" id="GO:0019240">
    <property type="term" value="P:citrulline biosynthetic process"/>
    <property type="evidence" value="ECO:0007669"/>
    <property type="project" value="TreeGrafter"/>
</dbReference>
<dbReference type="GO" id="GO:0006526">
    <property type="term" value="P:L-arginine biosynthetic process"/>
    <property type="evidence" value="ECO:0007669"/>
    <property type="project" value="UniProtKB-UniRule"/>
</dbReference>
<dbReference type="Gene3D" id="3.40.50.1370">
    <property type="entry name" value="Aspartate/ornithine carbamoyltransferase"/>
    <property type="match status" value="2"/>
</dbReference>
<dbReference type="HAMAP" id="MF_01109">
    <property type="entry name" value="OTCase"/>
    <property type="match status" value="1"/>
</dbReference>
<dbReference type="InterPro" id="IPR006132">
    <property type="entry name" value="Asp/Orn_carbamoyltranf_P-bd"/>
</dbReference>
<dbReference type="InterPro" id="IPR006130">
    <property type="entry name" value="Asp/Orn_carbamoylTrfase"/>
</dbReference>
<dbReference type="InterPro" id="IPR036901">
    <property type="entry name" value="Asp/Orn_carbamoylTrfase_sf"/>
</dbReference>
<dbReference type="InterPro" id="IPR006131">
    <property type="entry name" value="Asp_carbamoyltransf_Asp/Orn-bd"/>
</dbReference>
<dbReference type="InterPro" id="IPR002292">
    <property type="entry name" value="Orn/put_carbamltrans"/>
</dbReference>
<dbReference type="InterPro" id="IPR024904">
    <property type="entry name" value="OTCase_ArgI"/>
</dbReference>
<dbReference type="NCBIfam" id="TIGR00658">
    <property type="entry name" value="orni_carb_tr"/>
    <property type="match status" value="1"/>
</dbReference>
<dbReference type="PANTHER" id="PTHR45753:SF4">
    <property type="entry name" value="ORNITHINE CARBAMOYLTRANSFERASE SUBUNIT F-RELATED"/>
    <property type="match status" value="1"/>
</dbReference>
<dbReference type="PANTHER" id="PTHR45753">
    <property type="entry name" value="ORNITHINE CARBAMOYLTRANSFERASE, MITOCHONDRIAL"/>
    <property type="match status" value="1"/>
</dbReference>
<dbReference type="Pfam" id="PF00185">
    <property type="entry name" value="OTCace"/>
    <property type="match status" value="1"/>
</dbReference>
<dbReference type="Pfam" id="PF02729">
    <property type="entry name" value="OTCace_N"/>
    <property type="match status" value="1"/>
</dbReference>
<dbReference type="PRINTS" id="PR00100">
    <property type="entry name" value="AOTCASE"/>
</dbReference>
<dbReference type="PRINTS" id="PR00102">
    <property type="entry name" value="OTCASE"/>
</dbReference>
<dbReference type="SUPFAM" id="SSF53671">
    <property type="entry name" value="Aspartate/ornithine carbamoyltransferase"/>
    <property type="match status" value="1"/>
</dbReference>
<dbReference type="PROSITE" id="PS00097">
    <property type="entry name" value="CARBAMOYLTRANSFERASE"/>
    <property type="match status" value="1"/>
</dbReference>
<proteinExistence type="inferred from homology"/>
<comment type="function">
    <text evidence="1">Reversibly catalyzes the transfer of the carbamoyl group from carbamoyl phosphate (CP) to the N(epsilon) atom of ornithine (ORN) to produce L-citrulline.</text>
</comment>
<comment type="catalytic activity">
    <reaction evidence="2">
        <text>carbamoyl phosphate + L-ornithine = L-citrulline + phosphate + H(+)</text>
        <dbReference type="Rhea" id="RHEA:19513"/>
        <dbReference type="ChEBI" id="CHEBI:15378"/>
        <dbReference type="ChEBI" id="CHEBI:43474"/>
        <dbReference type="ChEBI" id="CHEBI:46911"/>
        <dbReference type="ChEBI" id="CHEBI:57743"/>
        <dbReference type="ChEBI" id="CHEBI:58228"/>
        <dbReference type="EC" id="2.1.3.3"/>
    </reaction>
</comment>
<comment type="pathway">
    <text evidence="2">Amino-acid biosynthesis; L-arginine biosynthesis; L-arginine from L-ornithine and carbamoyl phosphate: step 1/3.</text>
</comment>
<comment type="subcellular location">
    <subcellularLocation>
        <location evidence="2">Cytoplasm</location>
    </subcellularLocation>
</comment>
<comment type="similarity">
    <text evidence="2">Belongs to the aspartate/ornithine carbamoyltransferase superfamily. OTCase family.</text>
</comment>